<accession>A5I7I9</accession>
<accession>A7G8S1</accession>
<feature type="chain" id="PRO_0000323108" description="Small ribosomal subunit protein uS5">
    <location>
        <begin position="1"/>
        <end position="165"/>
    </location>
</feature>
<feature type="domain" description="S5 DRBM" evidence="1">
    <location>
        <begin position="10"/>
        <end position="73"/>
    </location>
</feature>
<evidence type="ECO:0000255" key="1">
    <source>
        <dbReference type="HAMAP-Rule" id="MF_01307"/>
    </source>
</evidence>
<evidence type="ECO:0000305" key="2"/>
<sequence length="165" mass="17480">MRIDPSTLNLKEKVVHINRVAKVVKGGRNFRFSVLVVVGDEAGHVGVGTGKSIEIPEAIRKAIEDAKKNIVEVKTVGTTVPHDIIGKFGKGEVLIMTAKEGTGVIAGGPVRAVLELAGLKDVRAKSKGSNNPTNMVNATIDGLARLRTVEDIAKLRGKTVEEILG</sequence>
<name>RS5_CLOBH</name>
<reference key="1">
    <citation type="journal article" date="2007" name="Genome Res.">
        <title>Genome sequence of a proteolytic (Group I) Clostridium botulinum strain Hall A and comparative analysis of the clostridial genomes.</title>
        <authorList>
            <person name="Sebaihia M."/>
            <person name="Peck M.W."/>
            <person name="Minton N.P."/>
            <person name="Thomson N.R."/>
            <person name="Holden M.T.G."/>
            <person name="Mitchell W.J."/>
            <person name="Carter A.T."/>
            <person name="Bentley S.D."/>
            <person name="Mason D.R."/>
            <person name="Crossman L."/>
            <person name="Paul C.J."/>
            <person name="Ivens A."/>
            <person name="Wells-Bennik M.H.J."/>
            <person name="Davis I.J."/>
            <person name="Cerdeno-Tarraga A.M."/>
            <person name="Churcher C."/>
            <person name="Quail M.A."/>
            <person name="Chillingworth T."/>
            <person name="Feltwell T."/>
            <person name="Fraser A."/>
            <person name="Goodhead I."/>
            <person name="Hance Z."/>
            <person name="Jagels K."/>
            <person name="Larke N."/>
            <person name="Maddison M."/>
            <person name="Moule S."/>
            <person name="Mungall K."/>
            <person name="Norbertczak H."/>
            <person name="Rabbinowitsch E."/>
            <person name="Sanders M."/>
            <person name="Simmonds M."/>
            <person name="White B."/>
            <person name="Whithead S."/>
            <person name="Parkhill J."/>
        </authorList>
    </citation>
    <scope>NUCLEOTIDE SEQUENCE [LARGE SCALE GENOMIC DNA]</scope>
    <source>
        <strain>Hall / ATCC 3502 / NCTC 13319 / Type A</strain>
    </source>
</reference>
<reference key="2">
    <citation type="journal article" date="2007" name="PLoS ONE">
        <title>Analysis of the neurotoxin complex genes in Clostridium botulinum A1-A4 and B1 strains: BoNT/A3, /Ba4 and /B1 clusters are located within plasmids.</title>
        <authorList>
            <person name="Smith T.J."/>
            <person name="Hill K.K."/>
            <person name="Foley B.T."/>
            <person name="Detter J.C."/>
            <person name="Munk A.C."/>
            <person name="Bruce D.C."/>
            <person name="Doggett N.A."/>
            <person name="Smith L.A."/>
            <person name="Marks J.D."/>
            <person name="Xie G."/>
            <person name="Brettin T.S."/>
        </authorList>
    </citation>
    <scope>NUCLEOTIDE SEQUENCE [LARGE SCALE GENOMIC DNA]</scope>
    <source>
        <strain>Hall / ATCC 3502 / NCTC 13319 / Type A</strain>
    </source>
</reference>
<dbReference type="EMBL" id="CP000727">
    <property type="protein sequence ID" value="ABS37029.1"/>
    <property type="molecule type" value="Genomic_DNA"/>
</dbReference>
<dbReference type="EMBL" id="AM412317">
    <property type="protein sequence ID" value="CAL85024.1"/>
    <property type="molecule type" value="Genomic_DNA"/>
</dbReference>
<dbReference type="RefSeq" id="WP_003357254.1">
    <property type="nucleotide sequence ID" value="NC_009698.1"/>
</dbReference>
<dbReference type="RefSeq" id="YP_001255945.1">
    <property type="nucleotide sequence ID" value="NC_009495.1"/>
</dbReference>
<dbReference type="RefSeq" id="YP_001389186.1">
    <property type="nucleotide sequence ID" value="NC_009698.1"/>
</dbReference>
<dbReference type="SMR" id="A5I7I9"/>
<dbReference type="GeneID" id="5185823"/>
<dbReference type="KEGG" id="cbh:CLC_3408"/>
<dbReference type="KEGG" id="cbo:CBO3464"/>
<dbReference type="PATRIC" id="fig|413999.7.peg.3440"/>
<dbReference type="HOGENOM" id="CLU_065898_2_2_9"/>
<dbReference type="PRO" id="PR:A5I7I9"/>
<dbReference type="Proteomes" id="UP000001986">
    <property type="component" value="Chromosome"/>
</dbReference>
<dbReference type="GO" id="GO:0022627">
    <property type="term" value="C:cytosolic small ribosomal subunit"/>
    <property type="evidence" value="ECO:0000318"/>
    <property type="project" value="GO_Central"/>
</dbReference>
<dbReference type="GO" id="GO:0019843">
    <property type="term" value="F:rRNA binding"/>
    <property type="evidence" value="ECO:0007669"/>
    <property type="project" value="UniProtKB-UniRule"/>
</dbReference>
<dbReference type="GO" id="GO:0003735">
    <property type="term" value="F:structural constituent of ribosome"/>
    <property type="evidence" value="ECO:0000318"/>
    <property type="project" value="GO_Central"/>
</dbReference>
<dbReference type="GO" id="GO:0006412">
    <property type="term" value="P:translation"/>
    <property type="evidence" value="ECO:0000318"/>
    <property type="project" value="GO_Central"/>
</dbReference>
<dbReference type="FunFam" id="3.30.160.20:FF:000001">
    <property type="entry name" value="30S ribosomal protein S5"/>
    <property type="match status" value="1"/>
</dbReference>
<dbReference type="FunFam" id="3.30.230.10:FF:000002">
    <property type="entry name" value="30S ribosomal protein S5"/>
    <property type="match status" value="1"/>
</dbReference>
<dbReference type="Gene3D" id="3.30.160.20">
    <property type="match status" value="1"/>
</dbReference>
<dbReference type="Gene3D" id="3.30.230.10">
    <property type="match status" value="1"/>
</dbReference>
<dbReference type="HAMAP" id="MF_01307_B">
    <property type="entry name" value="Ribosomal_uS5_B"/>
    <property type="match status" value="1"/>
</dbReference>
<dbReference type="InterPro" id="IPR020568">
    <property type="entry name" value="Ribosomal_Su5_D2-typ_SF"/>
</dbReference>
<dbReference type="InterPro" id="IPR000851">
    <property type="entry name" value="Ribosomal_uS5"/>
</dbReference>
<dbReference type="InterPro" id="IPR005712">
    <property type="entry name" value="Ribosomal_uS5_bac-type"/>
</dbReference>
<dbReference type="InterPro" id="IPR005324">
    <property type="entry name" value="Ribosomal_uS5_C"/>
</dbReference>
<dbReference type="InterPro" id="IPR013810">
    <property type="entry name" value="Ribosomal_uS5_N"/>
</dbReference>
<dbReference type="InterPro" id="IPR018192">
    <property type="entry name" value="Ribosomal_uS5_N_CS"/>
</dbReference>
<dbReference type="InterPro" id="IPR014721">
    <property type="entry name" value="Ribsml_uS5_D2-typ_fold_subgr"/>
</dbReference>
<dbReference type="NCBIfam" id="TIGR01021">
    <property type="entry name" value="rpsE_bact"/>
    <property type="match status" value="1"/>
</dbReference>
<dbReference type="PANTHER" id="PTHR48277">
    <property type="entry name" value="MITOCHONDRIAL RIBOSOMAL PROTEIN S5"/>
    <property type="match status" value="1"/>
</dbReference>
<dbReference type="PANTHER" id="PTHR48277:SF1">
    <property type="entry name" value="MITOCHONDRIAL RIBOSOMAL PROTEIN S5"/>
    <property type="match status" value="1"/>
</dbReference>
<dbReference type="Pfam" id="PF00333">
    <property type="entry name" value="Ribosomal_S5"/>
    <property type="match status" value="1"/>
</dbReference>
<dbReference type="Pfam" id="PF03719">
    <property type="entry name" value="Ribosomal_S5_C"/>
    <property type="match status" value="1"/>
</dbReference>
<dbReference type="SUPFAM" id="SSF54768">
    <property type="entry name" value="dsRNA-binding domain-like"/>
    <property type="match status" value="1"/>
</dbReference>
<dbReference type="SUPFAM" id="SSF54211">
    <property type="entry name" value="Ribosomal protein S5 domain 2-like"/>
    <property type="match status" value="1"/>
</dbReference>
<dbReference type="PROSITE" id="PS00585">
    <property type="entry name" value="RIBOSOMAL_S5"/>
    <property type="match status" value="1"/>
</dbReference>
<dbReference type="PROSITE" id="PS50881">
    <property type="entry name" value="S5_DSRBD"/>
    <property type="match status" value="1"/>
</dbReference>
<protein>
    <recommendedName>
        <fullName evidence="1">Small ribosomal subunit protein uS5</fullName>
    </recommendedName>
    <alternativeName>
        <fullName evidence="2">30S ribosomal protein S5</fullName>
    </alternativeName>
</protein>
<gene>
    <name evidence="1" type="primary">rpsE</name>
    <name type="ordered locus">CBO3464</name>
    <name type="ordered locus">CLC_3408</name>
</gene>
<keyword id="KW-1185">Reference proteome</keyword>
<keyword id="KW-0687">Ribonucleoprotein</keyword>
<keyword id="KW-0689">Ribosomal protein</keyword>
<keyword id="KW-0694">RNA-binding</keyword>
<keyword id="KW-0699">rRNA-binding</keyword>
<organism>
    <name type="scientific">Clostridium botulinum (strain Hall / ATCC 3502 / NCTC 13319 / Type A)</name>
    <dbReference type="NCBI Taxonomy" id="441771"/>
    <lineage>
        <taxon>Bacteria</taxon>
        <taxon>Bacillati</taxon>
        <taxon>Bacillota</taxon>
        <taxon>Clostridia</taxon>
        <taxon>Eubacteriales</taxon>
        <taxon>Clostridiaceae</taxon>
        <taxon>Clostridium</taxon>
    </lineage>
</organism>
<proteinExistence type="inferred from homology"/>
<comment type="function">
    <text evidence="1">With S4 and S12 plays an important role in translational accuracy.</text>
</comment>
<comment type="function">
    <text evidence="1">Located at the back of the 30S subunit body where it stabilizes the conformation of the head with respect to the body.</text>
</comment>
<comment type="subunit">
    <text evidence="1">Part of the 30S ribosomal subunit. Contacts proteins S4 and S8.</text>
</comment>
<comment type="domain">
    <text>The N-terminal domain interacts with the head of the 30S subunit; the C-terminal domain interacts with the body and contacts protein S4. The interaction surface between S4 and S5 is involved in control of translational fidelity.</text>
</comment>
<comment type="similarity">
    <text evidence="1">Belongs to the universal ribosomal protein uS5 family.</text>
</comment>